<feature type="chain" id="PRO_0000251616" description="Large ribosomal subunit protein uL16">
    <location>
        <begin position="1"/>
        <end position="137"/>
    </location>
</feature>
<dbReference type="EMBL" id="CP000235">
    <property type="protein sequence ID" value="ABD44337.1"/>
    <property type="molecule type" value="Genomic_DNA"/>
</dbReference>
<dbReference type="RefSeq" id="WP_011450422.1">
    <property type="nucleotide sequence ID" value="NC_007797.1"/>
</dbReference>
<dbReference type="SMR" id="Q2GL52"/>
<dbReference type="STRING" id="212042.APH_0287"/>
<dbReference type="PaxDb" id="212042-APH_0287"/>
<dbReference type="EnsemblBacteria" id="ABD44337">
    <property type="protein sequence ID" value="ABD44337"/>
    <property type="gene ID" value="APH_0287"/>
</dbReference>
<dbReference type="GeneID" id="92747516"/>
<dbReference type="KEGG" id="aph:APH_0287"/>
<dbReference type="eggNOG" id="COG0197">
    <property type="taxonomic scope" value="Bacteria"/>
</dbReference>
<dbReference type="HOGENOM" id="CLU_078858_2_1_5"/>
<dbReference type="Proteomes" id="UP000001943">
    <property type="component" value="Chromosome"/>
</dbReference>
<dbReference type="GO" id="GO:0022625">
    <property type="term" value="C:cytosolic large ribosomal subunit"/>
    <property type="evidence" value="ECO:0007669"/>
    <property type="project" value="TreeGrafter"/>
</dbReference>
<dbReference type="GO" id="GO:0019843">
    <property type="term" value="F:rRNA binding"/>
    <property type="evidence" value="ECO:0007669"/>
    <property type="project" value="UniProtKB-UniRule"/>
</dbReference>
<dbReference type="GO" id="GO:0003735">
    <property type="term" value="F:structural constituent of ribosome"/>
    <property type="evidence" value="ECO:0007669"/>
    <property type="project" value="InterPro"/>
</dbReference>
<dbReference type="GO" id="GO:0000049">
    <property type="term" value="F:tRNA binding"/>
    <property type="evidence" value="ECO:0007669"/>
    <property type="project" value="UniProtKB-KW"/>
</dbReference>
<dbReference type="GO" id="GO:0006412">
    <property type="term" value="P:translation"/>
    <property type="evidence" value="ECO:0007669"/>
    <property type="project" value="UniProtKB-UniRule"/>
</dbReference>
<dbReference type="CDD" id="cd01433">
    <property type="entry name" value="Ribosomal_L16_L10e"/>
    <property type="match status" value="1"/>
</dbReference>
<dbReference type="FunFam" id="3.90.1170.10:FF:000001">
    <property type="entry name" value="50S ribosomal protein L16"/>
    <property type="match status" value="1"/>
</dbReference>
<dbReference type="Gene3D" id="3.90.1170.10">
    <property type="entry name" value="Ribosomal protein L10e/L16"/>
    <property type="match status" value="1"/>
</dbReference>
<dbReference type="HAMAP" id="MF_01342">
    <property type="entry name" value="Ribosomal_uL16"/>
    <property type="match status" value="1"/>
</dbReference>
<dbReference type="InterPro" id="IPR047873">
    <property type="entry name" value="Ribosomal_uL16"/>
</dbReference>
<dbReference type="InterPro" id="IPR000114">
    <property type="entry name" value="Ribosomal_uL16_bact-type"/>
</dbReference>
<dbReference type="InterPro" id="IPR020798">
    <property type="entry name" value="Ribosomal_uL16_CS"/>
</dbReference>
<dbReference type="InterPro" id="IPR016180">
    <property type="entry name" value="Ribosomal_uL16_dom"/>
</dbReference>
<dbReference type="InterPro" id="IPR036920">
    <property type="entry name" value="Ribosomal_uL16_sf"/>
</dbReference>
<dbReference type="NCBIfam" id="TIGR01164">
    <property type="entry name" value="rplP_bact"/>
    <property type="match status" value="1"/>
</dbReference>
<dbReference type="PANTHER" id="PTHR12220">
    <property type="entry name" value="50S/60S RIBOSOMAL PROTEIN L16"/>
    <property type="match status" value="1"/>
</dbReference>
<dbReference type="PANTHER" id="PTHR12220:SF13">
    <property type="entry name" value="LARGE RIBOSOMAL SUBUNIT PROTEIN UL16M"/>
    <property type="match status" value="1"/>
</dbReference>
<dbReference type="Pfam" id="PF00252">
    <property type="entry name" value="Ribosomal_L16"/>
    <property type="match status" value="1"/>
</dbReference>
<dbReference type="PRINTS" id="PR00060">
    <property type="entry name" value="RIBOSOMALL16"/>
</dbReference>
<dbReference type="SUPFAM" id="SSF54686">
    <property type="entry name" value="Ribosomal protein L16p/L10e"/>
    <property type="match status" value="1"/>
</dbReference>
<dbReference type="PROSITE" id="PS00701">
    <property type="entry name" value="RIBOSOMAL_L16_2"/>
    <property type="match status" value="1"/>
</dbReference>
<protein>
    <recommendedName>
        <fullName evidence="1">Large ribosomal subunit protein uL16</fullName>
    </recommendedName>
    <alternativeName>
        <fullName evidence="2">50S ribosomal protein L16</fullName>
    </alternativeName>
</protein>
<accession>Q2GL52</accession>
<reference key="1">
    <citation type="journal article" date="2006" name="PLoS Genet.">
        <title>Comparative genomics of emerging human ehrlichiosis agents.</title>
        <authorList>
            <person name="Dunning Hotopp J.C."/>
            <person name="Lin M."/>
            <person name="Madupu R."/>
            <person name="Crabtree J."/>
            <person name="Angiuoli S.V."/>
            <person name="Eisen J.A."/>
            <person name="Seshadri R."/>
            <person name="Ren Q."/>
            <person name="Wu M."/>
            <person name="Utterback T.R."/>
            <person name="Smith S."/>
            <person name="Lewis M."/>
            <person name="Khouri H."/>
            <person name="Zhang C."/>
            <person name="Niu H."/>
            <person name="Lin Q."/>
            <person name="Ohashi N."/>
            <person name="Zhi N."/>
            <person name="Nelson W.C."/>
            <person name="Brinkac L.M."/>
            <person name="Dodson R.J."/>
            <person name="Rosovitz M.J."/>
            <person name="Sundaram J.P."/>
            <person name="Daugherty S.C."/>
            <person name="Davidsen T."/>
            <person name="Durkin A.S."/>
            <person name="Gwinn M.L."/>
            <person name="Haft D.H."/>
            <person name="Selengut J.D."/>
            <person name="Sullivan S.A."/>
            <person name="Zafar N."/>
            <person name="Zhou L."/>
            <person name="Benahmed F."/>
            <person name="Forberger H."/>
            <person name="Halpin R."/>
            <person name="Mulligan S."/>
            <person name="Robinson J."/>
            <person name="White O."/>
            <person name="Rikihisa Y."/>
            <person name="Tettelin H."/>
        </authorList>
    </citation>
    <scope>NUCLEOTIDE SEQUENCE [LARGE SCALE GENOMIC DNA]</scope>
    <source>
        <strain>HZ</strain>
    </source>
</reference>
<sequence>MLFVPRKTKHSKSFKGRISGNTKGGSELAFGQCGLKALEPCRLTSKQIESARRSISRSLRRVGKVWIRVFCHVPVSKKPVDVRMGKGKGSTEMWVCKVQPGRILFEIGGVSVELAREAFRKAQSKLPIKCSFVEEGF</sequence>
<proteinExistence type="inferred from homology"/>
<organism>
    <name type="scientific">Anaplasma phagocytophilum (strain HZ)</name>
    <dbReference type="NCBI Taxonomy" id="212042"/>
    <lineage>
        <taxon>Bacteria</taxon>
        <taxon>Pseudomonadati</taxon>
        <taxon>Pseudomonadota</taxon>
        <taxon>Alphaproteobacteria</taxon>
        <taxon>Rickettsiales</taxon>
        <taxon>Anaplasmataceae</taxon>
        <taxon>Anaplasma</taxon>
        <taxon>phagocytophilum group</taxon>
    </lineage>
</organism>
<name>RL16_ANAPZ</name>
<comment type="function">
    <text evidence="1">Binds 23S rRNA and is also seen to make contacts with the A and possibly P site tRNAs.</text>
</comment>
<comment type="subunit">
    <text evidence="1">Part of the 50S ribosomal subunit.</text>
</comment>
<comment type="similarity">
    <text evidence="1">Belongs to the universal ribosomal protein uL16 family.</text>
</comment>
<keyword id="KW-0687">Ribonucleoprotein</keyword>
<keyword id="KW-0689">Ribosomal protein</keyword>
<keyword id="KW-0694">RNA-binding</keyword>
<keyword id="KW-0699">rRNA-binding</keyword>
<keyword id="KW-0820">tRNA-binding</keyword>
<gene>
    <name evidence="1" type="primary">rplP</name>
    <name type="ordered locus">APH_0287</name>
</gene>
<evidence type="ECO:0000255" key="1">
    <source>
        <dbReference type="HAMAP-Rule" id="MF_01342"/>
    </source>
</evidence>
<evidence type="ECO:0000305" key="2"/>